<organism>
    <name type="scientific">Leptospira biflexa serovar Patoc (strain Patoc 1 / ATCC 23582 / Paris)</name>
    <dbReference type="NCBI Taxonomy" id="456481"/>
    <lineage>
        <taxon>Bacteria</taxon>
        <taxon>Pseudomonadati</taxon>
        <taxon>Spirochaetota</taxon>
        <taxon>Spirochaetia</taxon>
        <taxon>Leptospirales</taxon>
        <taxon>Leptospiraceae</taxon>
        <taxon>Leptospira</taxon>
    </lineage>
</organism>
<accession>B0SU49</accession>
<feature type="chain" id="PRO_0000357087" description="Methylthioribulose-1-phosphate dehydratase">
    <location>
        <begin position="1"/>
        <end position="209"/>
    </location>
</feature>
<feature type="binding site" evidence="1">
    <location>
        <position position="99"/>
    </location>
    <ligand>
        <name>Zn(2+)</name>
        <dbReference type="ChEBI" id="CHEBI:29105"/>
    </ligand>
</feature>
<feature type="binding site" evidence="1">
    <location>
        <position position="101"/>
    </location>
    <ligand>
        <name>Zn(2+)</name>
        <dbReference type="ChEBI" id="CHEBI:29105"/>
    </ligand>
</feature>
<comment type="function">
    <text evidence="1">Catalyzes the dehydration of methylthioribulose-1-phosphate (MTRu-1-P) into 2,3-diketo-5-methylthiopentyl-1-phosphate (DK-MTP-1-P).</text>
</comment>
<comment type="catalytic activity">
    <reaction evidence="1">
        <text>5-(methylsulfanyl)-D-ribulose 1-phosphate = 5-methylsulfanyl-2,3-dioxopentyl phosphate + H2O</text>
        <dbReference type="Rhea" id="RHEA:15549"/>
        <dbReference type="ChEBI" id="CHEBI:15377"/>
        <dbReference type="ChEBI" id="CHEBI:58548"/>
        <dbReference type="ChEBI" id="CHEBI:58828"/>
        <dbReference type="EC" id="4.2.1.109"/>
    </reaction>
</comment>
<comment type="cofactor">
    <cofactor evidence="1">
        <name>Zn(2+)</name>
        <dbReference type="ChEBI" id="CHEBI:29105"/>
    </cofactor>
    <text evidence="1">Binds 1 zinc ion per subunit.</text>
</comment>
<comment type="pathway">
    <text evidence="1">Amino-acid biosynthesis; L-methionine biosynthesis via salvage pathway; L-methionine from S-methyl-5-thio-alpha-D-ribose 1-phosphate: step 2/6.</text>
</comment>
<comment type="similarity">
    <text evidence="1">Belongs to the aldolase class II family. MtnB subfamily.</text>
</comment>
<name>MTNB_LEPBP</name>
<sequence>MDLITSLQEITKLSHLYYERQWMYATAGNLSTRDGSSRDQFWITASGKHKGELKDTDFVCVSVADGTLLKASDGLKPSAETSIHQVLYSQMPDIGCCLHVHTIDSNLLEFGVGKEEGSREIPIPPIEIIKAFGIWDEKPNLTMPVFYNHTHVPTIADEIKRYFISVGIPKVPFLLIEGHGPTVWGKSIAEANKHLEAVHFLLQVMARKV</sequence>
<evidence type="ECO:0000255" key="1">
    <source>
        <dbReference type="HAMAP-Rule" id="MF_01677"/>
    </source>
</evidence>
<keyword id="KW-0028">Amino-acid biosynthesis</keyword>
<keyword id="KW-0456">Lyase</keyword>
<keyword id="KW-0479">Metal-binding</keyword>
<keyword id="KW-0486">Methionine biosynthesis</keyword>
<keyword id="KW-1185">Reference proteome</keyword>
<keyword id="KW-0862">Zinc</keyword>
<reference key="1">
    <citation type="journal article" date="2008" name="PLoS ONE">
        <title>Genome sequence of the saprophyte Leptospira biflexa provides insights into the evolution of Leptospira and the pathogenesis of leptospirosis.</title>
        <authorList>
            <person name="Picardeau M."/>
            <person name="Bulach D.M."/>
            <person name="Bouchier C."/>
            <person name="Zuerner R.L."/>
            <person name="Zidane N."/>
            <person name="Wilson P.J."/>
            <person name="Creno S."/>
            <person name="Kuczek E.S."/>
            <person name="Bommezzadri S."/>
            <person name="Davis J.C."/>
            <person name="McGrath A."/>
            <person name="Johnson M.J."/>
            <person name="Boursaux-Eude C."/>
            <person name="Seemann T."/>
            <person name="Rouy Z."/>
            <person name="Coppel R.L."/>
            <person name="Rood J.I."/>
            <person name="Lajus A."/>
            <person name="Davies J.K."/>
            <person name="Medigue C."/>
            <person name="Adler B."/>
        </authorList>
    </citation>
    <scope>NUCLEOTIDE SEQUENCE [LARGE SCALE GENOMIC DNA]</scope>
    <source>
        <strain>Patoc 1 / ATCC 23582 / Paris</strain>
    </source>
</reference>
<gene>
    <name evidence="1" type="primary">mtnB</name>
    <name type="ordered locus">LEPBI_II0200</name>
</gene>
<protein>
    <recommendedName>
        <fullName evidence="1">Methylthioribulose-1-phosphate dehydratase</fullName>
        <shortName evidence="1">MTRu-1-P dehydratase</shortName>
        <ecNumber evidence="1">4.2.1.109</ecNumber>
    </recommendedName>
</protein>
<proteinExistence type="inferred from homology"/>
<dbReference type="EC" id="4.2.1.109" evidence="1"/>
<dbReference type="EMBL" id="CP000787">
    <property type="protein sequence ID" value="ABZ99733.1"/>
    <property type="molecule type" value="Genomic_DNA"/>
</dbReference>
<dbReference type="RefSeq" id="WP_012476670.1">
    <property type="nucleotide sequence ID" value="NC_010843.1"/>
</dbReference>
<dbReference type="SMR" id="B0SU49"/>
<dbReference type="STRING" id="456481.LEPBI_II0200"/>
<dbReference type="KEGG" id="lbi:LEPBI_II0200"/>
<dbReference type="HOGENOM" id="CLU_006033_4_1_12"/>
<dbReference type="OrthoDB" id="9805559at2"/>
<dbReference type="BioCyc" id="LBIF456481:LEPBI_RS18045-MONOMER"/>
<dbReference type="UniPathway" id="UPA00904">
    <property type="reaction ID" value="UER00875"/>
</dbReference>
<dbReference type="Proteomes" id="UP000001847">
    <property type="component" value="Chromosome II"/>
</dbReference>
<dbReference type="GO" id="GO:0005737">
    <property type="term" value="C:cytoplasm"/>
    <property type="evidence" value="ECO:0007669"/>
    <property type="project" value="InterPro"/>
</dbReference>
<dbReference type="GO" id="GO:0046570">
    <property type="term" value="F:methylthioribulose 1-phosphate dehydratase activity"/>
    <property type="evidence" value="ECO:0007669"/>
    <property type="project" value="UniProtKB-UniRule"/>
</dbReference>
<dbReference type="GO" id="GO:0008270">
    <property type="term" value="F:zinc ion binding"/>
    <property type="evidence" value="ECO:0007669"/>
    <property type="project" value="UniProtKB-UniRule"/>
</dbReference>
<dbReference type="GO" id="GO:0019509">
    <property type="term" value="P:L-methionine salvage from methylthioadenosine"/>
    <property type="evidence" value="ECO:0007669"/>
    <property type="project" value="UniProtKB-UniRule"/>
</dbReference>
<dbReference type="Gene3D" id="3.40.225.10">
    <property type="entry name" value="Class II aldolase/adducin N-terminal domain"/>
    <property type="match status" value="1"/>
</dbReference>
<dbReference type="HAMAP" id="MF_01677">
    <property type="entry name" value="Salvage_MtnB"/>
    <property type="match status" value="1"/>
</dbReference>
<dbReference type="InterPro" id="IPR001303">
    <property type="entry name" value="Aldolase_II/adducin_N"/>
</dbReference>
<dbReference type="InterPro" id="IPR036409">
    <property type="entry name" value="Aldolase_II/adducin_N_sf"/>
</dbReference>
<dbReference type="InterPro" id="IPR017714">
    <property type="entry name" value="MethylthioRu-1-P_deHdtase_MtnB"/>
</dbReference>
<dbReference type="NCBIfam" id="TIGR03328">
    <property type="entry name" value="salvage_mtnB"/>
    <property type="match status" value="1"/>
</dbReference>
<dbReference type="PANTHER" id="PTHR10640">
    <property type="entry name" value="METHYLTHIORIBULOSE-1-PHOSPHATE DEHYDRATASE"/>
    <property type="match status" value="1"/>
</dbReference>
<dbReference type="PANTHER" id="PTHR10640:SF7">
    <property type="entry name" value="METHYLTHIORIBULOSE-1-PHOSPHATE DEHYDRATASE"/>
    <property type="match status" value="1"/>
</dbReference>
<dbReference type="Pfam" id="PF00596">
    <property type="entry name" value="Aldolase_II"/>
    <property type="match status" value="1"/>
</dbReference>
<dbReference type="SMART" id="SM01007">
    <property type="entry name" value="Aldolase_II"/>
    <property type="match status" value="1"/>
</dbReference>
<dbReference type="SUPFAM" id="SSF53639">
    <property type="entry name" value="AraD/HMP-PK domain-like"/>
    <property type="match status" value="1"/>
</dbReference>